<gene>
    <name evidence="1" type="primary">rpsJ</name>
    <name type="ordered locus">Pnap_0202</name>
</gene>
<name>RS10_POLNA</name>
<proteinExistence type="inferred from homology"/>
<comment type="function">
    <text evidence="1">Involved in the binding of tRNA to the ribosomes.</text>
</comment>
<comment type="subunit">
    <text evidence="1">Part of the 30S ribosomal subunit.</text>
</comment>
<comment type="similarity">
    <text evidence="1">Belongs to the universal ribosomal protein uS10 family.</text>
</comment>
<accession>A1VIP9</accession>
<sequence>MATKQKIRIRLKAFDYKLIDQSAAEIVDTAKRTGAIVKGPVPLPTRMKRFDILRSPHVNKTSRDQLEIRTHQRLMDIVDPTDKTVDALMKLDLPAGVDVEIKLQ</sequence>
<organism>
    <name type="scientific">Polaromonas naphthalenivorans (strain CJ2)</name>
    <dbReference type="NCBI Taxonomy" id="365044"/>
    <lineage>
        <taxon>Bacteria</taxon>
        <taxon>Pseudomonadati</taxon>
        <taxon>Pseudomonadota</taxon>
        <taxon>Betaproteobacteria</taxon>
        <taxon>Burkholderiales</taxon>
        <taxon>Comamonadaceae</taxon>
        <taxon>Polaromonas</taxon>
    </lineage>
</organism>
<reference key="1">
    <citation type="journal article" date="2009" name="Environ. Microbiol.">
        <title>The genome of Polaromonas naphthalenivorans strain CJ2, isolated from coal tar-contaminated sediment, reveals physiological and metabolic versatility and evolution through extensive horizontal gene transfer.</title>
        <authorList>
            <person name="Yagi J.M."/>
            <person name="Sims D."/>
            <person name="Brettin T."/>
            <person name="Bruce D."/>
            <person name="Madsen E.L."/>
        </authorList>
    </citation>
    <scope>NUCLEOTIDE SEQUENCE [LARGE SCALE GENOMIC DNA]</scope>
    <source>
        <strain>CJ2</strain>
    </source>
</reference>
<protein>
    <recommendedName>
        <fullName evidence="1">Small ribosomal subunit protein uS10</fullName>
    </recommendedName>
    <alternativeName>
        <fullName evidence="2">30S ribosomal protein S10</fullName>
    </alternativeName>
</protein>
<keyword id="KW-1185">Reference proteome</keyword>
<keyword id="KW-0687">Ribonucleoprotein</keyword>
<keyword id="KW-0689">Ribosomal protein</keyword>
<dbReference type="EMBL" id="CP000529">
    <property type="protein sequence ID" value="ABM35527.1"/>
    <property type="molecule type" value="Genomic_DNA"/>
</dbReference>
<dbReference type="RefSeq" id="WP_007838118.1">
    <property type="nucleotide sequence ID" value="NC_008781.1"/>
</dbReference>
<dbReference type="SMR" id="A1VIP9"/>
<dbReference type="STRING" id="365044.Pnap_0202"/>
<dbReference type="GeneID" id="86906989"/>
<dbReference type="KEGG" id="pna:Pnap_0202"/>
<dbReference type="eggNOG" id="COG0051">
    <property type="taxonomic scope" value="Bacteria"/>
</dbReference>
<dbReference type="HOGENOM" id="CLU_122625_1_3_4"/>
<dbReference type="OrthoDB" id="9804464at2"/>
<dbReference type="Proteomes" id="UP000000644">
    <property type="component" value="Chromosome"/>
</dbReference>
<dbReference type="GO" id="GO:1990904">
    <property type="term" value="C:ribonucleoprotein complex"/>
    <property type="evidence" value="ECO:0007669"/>
    <property type="project" value="UniProtKB-KW"/>
</dbReference>
<dbReference type="GO" id="GO:0005840">
    <property type="term" value="C:ribosome"/>
    <property type="evidence" value="ECO:0007669"/>
    <property type="project" value="UniProtKB-KW"/>
</dbReference>
<dbReference type="GO" id="GO:0003735">
    <property type="term" value="F:structural constituent of ribosome"/>
    <property type="evidence" value="ECO:0007669"/>
    <property type="project" value="InterPro"/>
</dbReference>
<dbReference type="GO" id="GO:0000049">
    <property type="term" value="F:tRNA binding"/>
    <property type="evidence" value="ECO:0007669"/>
    <property type="project" value="UniProtKB-UniRule"/>
</dbReference>
<dbReference type="GO" id="GO:0006412">
    <property type="term" value="P:translation"/>
    <property type="evidence" value="ECO:0007669"/>
    <property type="project" value="UniProtKB-UniRule"/>
</dbReference>
<dbReference type="FunFam" id="3.30.70.600:FF:000001">
    <property type="entry name" value="30S ribosomal protein S10"/>
    <property type="match status" value="1"/>
</dbReference>
<dbReference type="Gene3D" id="3.30.70.600">
    <property type="entry name" value="Ribosomal protein S10 domain"/>
    <property type="match status" value="1"/>
</dbReference>
<dbReference type="HAMAP" id="MF_00508">
    <property type="entry name" value="Ribosomal_uS10"/>
    <property type="match status" value="1"/>
</dbReference>
<dbReference type="InterPro" id="IPR001848">
    <property type="entry name" value="Ribosomal_uS10"/>
</dbReference>
<dbReference type="InterPro" id="IPR018268">
    <property type="entry name" value="Ribosomal_uS10_CS"/>
</dbReference>
<dbReference type="InterPro" id="IPR027486">
    <property type="entry name" value="Ribosomal_uS10_dom"/>
</dbReference>
<dbReference type="InterPro" id="IPR036838">
    <property type="entry name" value="Ribosomal_uS10_dom_sf"/>
</dbReference>
<dbReference type="NCBIfam" id="NF001861">
    <property type="entry name" value="PRK00596.1"/>
    <property type="match status" value="1"/>
</dbReference>
<dbReference type="NCBIfam" id="TIGR01049">
    <property type="entry name" value="rpsJ_bact"/>
    <property type="match status" value="1"/>
</dbReference>
<dbReference type="PANTHER" id="PTHR11700">
    <property type="entry name" value="30S RIBOSOMAL PROTEIN S10 FAMILY MEMBER"/>
    <property type="match status" value="1"/>
</dbReference>
<dbReference type="Pfam" id="PF00338">
    <property type="entry name" value="Ribosomal_S10"/>
    <property type="match status" value="1"/>
</dbReference>
<dbReference type="PRINTS" id="PR00971">
    <property type="entry name" value="RIBOSOMALS10"/>
</dbReference>
<dbReference type="SMART" id="SM01403">
    <property type="entry name" value="Ribosomal_S10"/>
    <property type="match status" value="1"/>
</dbReference>
<dbReference type="SUPFAM" id="SSF54999">
    <property type="entry name" value="Ribosomal protein S10"/>
    <property type="match status" value="1"/>
</dbReference>
<dbReference type="PROSITE" id="PS00361">
    <property type="entry name" value="RIBOSOMAL_S10"/>
    <property type="match status" value="1"/>
</dbReference>
<feature type="chain" id="PRO_1000015077" description="Small ribosomal subunit protein uS10">
    <location>
        <begin position="1"/>
        <end position="104"/>
    </location>
</feature>
<evidence type="ECO:0000255" key="1">
    <source>
        <dbReference type="HAMAP-Rule" id="MF_00508"/>
    </source>
</evidence>
<evidence type="ECO:0000305" key="2"/>